<protein>
    <recommendedName>
        <fullName evidence="1">Lipoprotein signal peptidase</fullName>
        <ecNumber evidence="1">3.4.23.36</ecNumber>
    </recommendedName>
    <alternativeName>
        <fullName evidence="1">Prolipoprotein signal peptidase</fullName>
    </alternativeName>
    <alternativeName>
        <fullName evidence="1">Signal peptidase II</fullName>
        <shortName evidence="1">SPase II</shortName>
    </alternativeName>
</protein>
<accession>Q67Q16</accession>
<proteinExistence type="inferred from homology"/>
<feature type="chain" id="PRO_1000076937" description="Lipoprotein signal peptidase">
    <location>
        <begin position="1"/>
        <end position="152"/>
    </location>
</feature>
<feature type="transmembrane region" description="Helical" evidence="1">
    <location>
        <begin position="55"/>
        <end position="75"/>
    </location>
</feature>
<feature type="transmembrane region" description="Helical" evidence="1">
    <location>
        <begin position="87"/>
        <end position="107"/>
    </location>
</feature>
<feature type="transmembrane region" description="Helical" evidence="1">
    <location>
        <begin position="125"/>
        <end position="145"/>
    </location>
</feature>
<feature type="active site" evidence="1">
    <location>
        <position position="111"/>
    </location>
</feature>
<feature type="active site" evidence="1">
    <location>
        <position position="129"/>
    </location>
</feature>
<evidence type="ECO:0000255" key="1">
    <source>
        <dbReference type="HAMAP-Rule" id="MF_00161"/>
    </source>
</evidence>
<comment type="function">
    <text evidence="1">This protein specifically catalyzes the removal of signal peptides from prolipoproteins.</text>
</comment>
<comment type="catalytic activity">
    <reaction evidence="1">
        <text>Release of signal peptides from bacterial membrane prolipoproteins. Hydrolyzes -Xaa-Yaa-Zaa-|-(S,diacylglyceryl)Cys-, in which Xaa is hydrophobic (preferably Leu), and Yaa (Ala or Ser) and Zaa (Gly or Ala) have small, neutral side chains.</text>
        <dbReference type="EC" id="3.4.23.36"/>
    </reaction>
</comment>
<comment type="pathway">
    <text evidence="1">Protein modification; lipoprotein biosynthesis (signal peptide cleavage).</text>
</comment>
<comment type="subcellular location">
    <subcellularLocation>
        <location evidence="1">Cell membrane</location>
        <topology evidence="1">Multi-pass membrane protein</topology>
    </subcellularLocation>
</comment>
<comment type="similarity">
    <text evidence="1">Belongs to the peptidase A8 family.</text>
</comment>
<sequence>MLSIVLAIVAVVVDQVTKWLVATRMALHSEIEIIPGFFSLQYVHNTGAAFGMLRNGRWFFVAVAALAVAGILYYLRQPESRHPLLRVALGLVMGGAVGNMIDRIATGRVVDFLLFYWRDYYFPNFNVADICVTVGVGLLFLHLVLVERKGTA</sequence>
<dbReference type="EC" id="3.4.23.36" evidence="1"/>
<dbReference type="EMBL" id="AP006840">
    <property type="protein sequence ID" value="BAD40227.1"/>
    <property type="molecule type" value="Genomic_DNA"/>
</dbReference>
<dbReference type="RefSeq" id="WP_011195373.1">
    <property type="nucleotide sequence ID" value="NC_006177.1"/>
</dbReference>
<dbReference type="SMR" id="Q67Q16"/>
<dbReference type="STRING" id="292459.STH1242"/>
<dbReference type="KEGG" id="sth:STH1242"/>
<dbReference type="eggNOG" id="COG0597">
    <property type="taxonomic scope" value="Bacteria"/>
</dbReference>
<dbReference type="HOGENOM" id="CLU_083252_3_3_9"/>
<dbReference type="OrthoDB" id="9810259at2"/>
<dbReference type="UniPathway" id="UPA00665"/>
<dbReference type="Proteomes" id="UP000000417">
    <property type="component" value="Chromosome"/>
</dbReference>
<dbReference type="GO" id="GO:0005886">
    <property type="term" value="C:plasma membrane"/>
    <property type="evidence" value="ECO:0007669"/>
    <property type="project" value="UniProtKB-SubCell"/>
</dbReference>
<dbReference type="GO" id="GO:0004190">
    <property type="term" value="F:aspartic-type endopeptidase activity"/>
    <property type="evidence" value="ECO:0007669"/>
    <property type="project" value="UniProtKB-UniRule"/>
</dbReference>
<dbReference type="GO" id="GO:0006508">
    <property type="term" value="P:proteolysis"/>
    <property type="evidence" value="ECO:0007669"/>
    <property type="project" value="UniProtKB-KW"/>
</dbReference>
<dbReference type="HAMAP" id="MF_00161">
    <property type="entry name" value="LspA"/>
    <property type="match status" value="1"/>
</dbReference>
<dbReference type="InterPro" id="IPR001872">
    <property type="entry name" value="Peptidase_A8"/>
</dbReference>
<dbReference type="NCBIfam" id="TIGR00077">
    <property type="entry name" value="lspA"/>
    <property type="match status" value="1"/>
</dbReference>
<dbReference type="PANTHER" id="PTHR33695">
    <property type="entry name" value="LIPOPROTEIN SIGNAL PEPTIDASE"/>
    <property type="match status" value="1"/>
</dbReference>
<dbReference type="PANTHER" id="PTHR33695:SF1">
    <property type="entry name" value="LIPOPROTEIN SIGNAL PEPTIDASE"/>
    <property type="match status" value="1"/>
</dbReference>
<dbReference type="Pfam" id="PF01252">
    <property type="entry name" value="Peptidase_A8"/>
    <property type="match status" value="1"/>
</dbReference>
<dbReference type="PRINTS" id="PR00781">
    <property type="entry name" value="LIPOSIGPTASE"/>
</dbReference>
<dbReference type="PROSITE" id="PS00855">
    <property type="entry name" value="SPASE_II"/>
    <property type="match status" value="1"/>
</dbReference>
<gene>
    <name evidence="1" type="primary">lspA</name>
    <name type="ordered locus">STH1242</name>
</gene>
<reference key="1">
    <citation type="journal article" date="2004" name="Nucleic Acids Res.">
        <title>Genome sequence of Symbiobacterium thermophilum, an uncultivable bacterium that depends on microbial commensalism.</title>
        <authorList>
            <person name="Ueda K."/>
            <person name="Yamashita A."/>
            <person name="Ishikawa J."/>
            <person name="Shimada M."/>
            <person name="Watsuji T."/>
            <person name="Morimura K."/>
            <person name="Ikeda H."/>
            <person name="Hattori M."/>
            <person name="Beppu T."/>
        </authorList>
    </citation>
    <scope>NUCLEOTIDE SEQUENCE [LARGE SCALE GENOMIC DNA]</scope>
    <source>
        <strain>DSM 24528 / JCM 14929 / IAM 14863 / T</strain>
    </source>
</reference>
<organism>
    <name type="scientific">Symbiobacterium thermophilum (strain DSM 24528 / JCM 14929 / IAM 14863 / T)</name>
    <dbReference type="NCBI Taxonomy" id="292459"/>
    <lineage>
        <taxon>Bacteria</taxon>
        <taxon>Bacillati</taxon>
        <taxon>Bacillota</taxon>
        <taxon>Clostridia</taxon>
        <taxon>Eubacteriales</taxon>
        <taxon>Symbiobacteriaceae</taxon>
        <taxon>Symbiobacterium</taxon>
    </lineage>
</organism>
<name>LSPA_SYMTH</name>
<keyword id="KW-0064">Aspartyl protease</keyword>
<keyword id="KW-1003">Cell membrane</keyword>
<keyword id="KW-0378">Hydrolase</keyword>
<keyword id="KW-0472">Membrane</keyword>
<keyword id="KW-0645">Protease</keyword>
<keyword id="KW-1185">Reference proteome</keyword>
<keyword id="KW-0812">Transmembrane</keyword>
<keyword id="KW-1133">Transmembrane helix</keyword>